<organism>
    <name type="scientific">Nitrobacter winogradskyi (strain ATCC 25391 / DSM 10237 / CIP 104748 / NCIMB 11846 / Nb-255)</name>
    <dbReference type="NCBI Taxonomy" id="323098"/>
    <lineage>
        <taxon>Bacteria</taxon>
        <taxon>Pseudomonadati</taxon>
        <taxon>Pseudomonadota</taxon>
        <taxon>Alphaproteobacteria</taxon>
        <taxon>Hyphomicrobiales</taxon>
        <taxon>Nitrobacteraceae</taxon>
        <taxon>Nitrobacter</taxon>
    </lineage>
</organism>
<protein>
    <recommendedName>
        <fullName evidence="1">Holliday junction branch migration complex subunit RuvA</fullName>
    </recommendedName>
</protein>
<accession>Q3SP13</accession>
<sequence>MIGKLKGVIDSYGEDYVILDVGGVGYQVHCASRTLQALPSPGQAAVLSIETYVREDQIKLFGFRTDHEREWFRLLQTVQGVGARVALAVLGTLSPADLASAIALRDKASVARTPGIGPKVAERIVTELKDKAPSFANVDPTVVHLAGDLDDQRAPRPVRDAISALVNLGYGQPQATAAIAAASRGAGENAETAQLIRLGLKELSK</sequence>
<feature type="chain" id="PRO_0000224885" description="Holliday junction branch migration complex subunit RuvA">
    <location>
        <begin position="1"/>
        <end position="205"/>
    </location>
</feature>
<feature type="region of interest" description="Domain I" evidence="1">
    <location>
        <begin position="1"/>
        <end position="64"/>
    </location>
</feature>
<feature type="region of interest" description="Domain II" evidence="1">
    <location>
        <begin position="65"/>
        <end position="143"/>
    </location>
</feature>
<feature type="region of interest" description="Flexible linker" evidence="1">
    <location>
        <begin position="144"/>
        <end position="154"/>
    </location>
</feature>
<feature type="region of interest" description="Domain III" evidence="1">
    <location>
        <begin position="154"/>
        <end position="205"/>
    </location>
</feature>
<keyword id="KW-0963">Cytoplasm</keyword>
<keyword id="KW-0227">DNA damage</keyword>
<keyword id="KW-0233">DNA recombination</keyword>
<keyword id="KW-0234">DNA repair</keyword>
<keyword id="KW-0238">DNA-binding</keyword>
<keyword id="KW-1185">Reference proteome</keyword>
<reference key="1">
    <citation type="journal article" date="2006" name="Appl. Environ. Microbiol.">
        <title>Genome sequence of the chemolithoautotrophic nitrite-oxidizing bacterium Nitrobacter winogradskyi Nb-255.</title>
        <authorList>
            <person name="Starkenburg S.R."/>
            <person name="Chain P.S.G."/>
            <person name="Sayavedra-Soto L.A."/>
            <person name="Hauser L."/>
            <person name="Land M.L."/>
            <person name="Larimer F.W."/>
            <person name="Malfatti S.A."/>
            <person name="Klotz M.G."/>
            <person name="Bottomley P.J."/>
            <person name="Arp D.J."/>
            <person name="Hickey W.J."/>
        </authorList>
    </citation>
    <scope>NUCLEOTIDE SEQUENCE [LARGE SCALE GENOMIC DNA]</scope>
    <source>
        <strain>ATCC 25391 / DSM 10237 / CIP 104748 / NCIMB 11846 / Nb-255</strain>
    </source>
</reference>
<dbReference type="EMBL" id="CP000115">
    <property type="protein sequence ID" value="ABA05978.1"/>
    <property type="molecule type" value="Genomic_DNA"/>
</dbReference>
<dbReference type="RefSeq" id="WP_011315924.1">
    <property type="nucleotide sequence ID" value="NC_007406.1"/>
</dbReference>
<dbReference type="SMR" id="Q3SP13"/>
<dbReference type="STRING" id="323098.Nwi_2725"/>
<dbReference type="KEGG" id="nwi:Nwi_2725"/>
<dbReference type="eggNOG" id="COG0632">
    <property type="taxonomic scope" value="Bacteria"/>
</dbReference>
<dbReference type="HOGENOM" id="CLU_087936_3_0_5"/>
<dbReference type="OrthoDB" id="5293449at2"/>
<dbReference type="Proteomes" id="UP000002531">
    <property type="component" value="Chromosome"/>
</dbReference>
<dbReference type="GO" id="GO:0005737">
    <property type="term" value="C:cytoplasm"/>
    <property type="evidence" value="ECO:0007669"/>
    <property type="project" value="UniProtKB-SubCell"/>
</dbReference>
<dbReference type="GO" id="GO:0009379">
    <property type="term" value="C:Holliday junction helicase complex"/>
    <property type="evidence" value="ECO:0007669"/>
    <property type="project" value="InterPro"/>
</dbReference>
<dbReference type="GO" id="GO:0048476">
    <property type="term" value="C:Holliday junction resolvase complex"/>
    <property type="evidence" value="ECO:0007669"/>
    <property type="project" value="UniProtKB-UniRule"/>
</dbReference>
<dbReference type="GO" id="GO:0005524">
    <property type="term" value="F:ATP binding"/>
    <property type="evidence" value="ECO:0007669"/>
    <property type="project" value="InterPro"/>
</dbReference>
<dbReference type="GO" id="GO:0000400">
    <property type="term" value="F:four-way junction DNA binding"/>
    <property type="evidence" value="ECO:0007669"/>
    <property type="project" value="UniProtKB-UniRule"/>
</dbReference>
<dbReference type="GO" id="GO:0009378">
    <property type="term" value="F:four-way junction helicase activity"/>
    <property type="evidence" value="ECO:0007669"/>
    <property type="project" value="InterPro"/>
</dbReference>
<dbReference type="GO" id="GO:0006310">
    <property type="term" value="P:DNA recombination"/>
    <property type="evidence" value="ECO:0007669"/>
    <property type="project" value="UniProtKB-UniRule"/>
</dbReference>
<dbReference type="GO" id="GO:0006281">
    <property type="term" value="P:DNA repair"/>
    <property type="evidence" value="ECO:0007669"/>
    <property type="project" value="UniProtKB-UniRule"/>
</dbReference>
<dbReference type="Gene3D" id="1.10.150.20">
    <property type="entry name" value="5' to 3' exonuclease, C-terminal subdomain"/>
    <property type="match status" value="1"/>
</dbReference>
<dbReference type="Gene3D" id="1.10.8.10">
    <property type="entry name" value="DNA helicase RuvA subunit, C-terminal domain"/>
    <property type="match status" value="1"/>
</dbReference>
<dbReference type="Gene3D" id="2.40.50.140">
    <property type="entry name" value="Nucleic acid-binding proteins"/>
    <property type="match status" value="1"/>
</dbReference>
<dbReference type="HAMAP" id="MF_00031">
    <property type="entry name" value="DNA_HJ_migration_RuvA"/>
    <property type="match status" value="1"/>
</dbReference>
<dbReference type="InterPro" id="IPR013849">
    <property type="entry name" value="DNA_helicase_Holl-junc_RuvA_I"/>
</dbReference>
<dbReference type="InterPro" id="IPR003583">
    <property type="entry name" value="Hlx-hairpin-Hlx_DNA-bd_motif"/>
</dbReference>
<dbReference type="InterPro" id="IPR012340">
    <property type="entry name" value="NA-bd_OB-fold"/>
</dbReference>
<dbReference type="InterPro" id="IPR000085">
    <property type="entry name" value="RuvA"/>
</dbReference>
<dbReference type="InterPro" id="IPR010994">
    <property type="entry name" value="RuvA_2-like"/>
</dbReference>
<dbReference type="InterPro" id="IPR011114">
    <property type="entry name" value="RuvA_C"/>
</dbReference>
<dbReference type="InterPro" id="IPR036267">
    <property type="entry name" value="RuvA_C_sf"/>
</dbReference>
<dbReference type="NCBIfam" id="TIGR00084">
    <property type="entry name" value="ruvA"/>
    <property type="match status" value="1"/>
</dbReference>
<dbReference type="Pfam" id="PF14520">
    <property type="entry name" value="HHH_5"/>
    <property type="match status" value="1"/>
</dbReference>
<dbReference type="Pfam" id="PF07499">
    <property type="entry name" value="RuvA_C"/>
    <property type="match status" value="1"/>
</dbReference>
<dbReference type="Pfam" id="PF01330">
    <property type="entry name" value="RuvA_N"/>
    <property type="match status" value="1"/>
</dbReference>
<dbReference type="SMART" id="SM00278">
    <property type="entry name" value="HhH1"/>
    <property type="match status" value="2"/>
</dbReference>
<dbReference type="SUPFAM" id="SSF46929">
    <property type="entry name" value="DNA helicase RuvA subunit, C-terminal domain"/>
    <property type="match status" value="1"/>
</dbReference>
<dbReference type="SUPFAM" id="SSF50249">
    <property type="entry name" value="Nucleic acid-binding proteins"/>
    <property type="match status" value="1"/>
</dbReference>
<dbReference type="SUPFAM" id="SSF47781">
    <property type="entry name" value="RuvA domain 2-like"/>
    <property type="match status" value="1"/>
</dbReference>
<evidence type="ECO:0000255" key="1">
    <source>
        <dbReference type="HAMAP-Rule" id="MF_00031"/>
    </source>
</evidence>
<gene>
    <name evidence="1" type="primary">ruvA</name>
    <name type="ordered locus">Nwi_2725</name>
</gene>
<comment type="function">
    <text evidence="1">The RuvA-RuvB-RuvC complex processes Holliday junction (HJ) DNA during genetic recombination and DNA repair, while the RuvA-RuvB complex plays an important role in the rescue of blocked DNA replication forks via replication fork reversal (RFR). RuvA specifically binds to HJ cruciform DNA, conferring on it an open structure. The RuvB hexamer acts as an ATP-dependent pump, pulling dsDNA into and through the RuvAB complex. HJ branch migration allows RuvC to scan DNA until it finds its consensus sequence, where it cleaves and resolves the cruciform DNA.</text>
</comment>
<comment type="subunit">
    <text evidence="1">Homotetramer. Forms an RuvA(8)-RuvB(12)-Holliday junction (HJ) complex. HJ DNA is sandwiched between 2 RuvA tetramers; dsDNA enters through RuvA and exits via RuvB. An RuvB hexamer assembles on each DNA strand where it exits the tetramer. Each RuvB hexamer is contacted by two RuvA subunits (via domain III) on 2 adjacent RuvB subunits; this complex drives branch migration. In the full resolvosome a probable DNA-RuvA(4)-RuvB(12)-RuvC(2) complex forms which resolves the HJ.</text>
</comment>
<comment type="subcellular location">
    <subcellularLocation>
        <location evidence="1">Cytoplasm</location>
    </subcellularLocation>
</comment>
<comment type="domain">
    <text evidence="1">Has three domains with a flexible linker between the domains II and III and assumes an 'L' shape. Domain III is highly mobile and contacts RuvB.</text>
</comment>
<comment type="similarity">
    <text evidence="1">Belongs to the RuvA family.</text>
</comment>
<proteinExistence type="inferred from homology"/>
<name>RUVA_NITWN</name>